<dbReference type="EMBL" id="MN765034">
    <property type="protein sequence ID" value="QIQ51444.1"/>
    <property type="molecule type" value="mRNA"/>
</dbReference>
<dbReference type="GO" id="GO:0005576">
    <property type="term" value="C:extracellular region"/>
    <property type="evidence" value="ECO:0000314"/>
    <property type="project" value="UniProtKB"/>
</dbReference>
<dbReference type="GO" id="GO:0090729">
    <property type="term" value="F:toxin activity"/>
    <property type="evidence" value="ECO:0000314"/>
    <property type="project" value="UniProtKB"/>
</dbReference>
<dbReference type="GO" id="GO:0044616">
    <property type="term" value="P:venom-mediated paralysis in another organism"/>
    <property type="evidence" value="ECO:0000314"/>
    <property type="project" value="UniProtKB"/>
</dbReference>
<dbReference type="InterPro" id="IPR049518">
    <property type="entry name" value="Pilosulin"/>
</dbReference>
<dbReference type="Pfam" id="PF17499">
    <property type="entry name" value="Pilosulin"/>
    <property type="match status" value="1"/>
</dbReference>
<organism evidence="7">
    <name type="scientific">Manica rubida</name>
    <name type="common">European giant red ant</name>
    <dbReference type="NCBI Taxonomy" id="219785"/>
    <lineage>
        <taxon>Eukaryota</taxon>
        <taxon>Metazoa</taxon>
        <taxon>Ecdysozoa</taxon>
        <taxon>Arthropoda</taxon>
        <taxon>Hexapoda</taxon>
        <taxon>Insecta</taxon>
        <taxon>Pterygota</taxon>
        <taxon>Neoptera</taxon>
        <taxon>Endopterygota</taxon>
        <taxon>Hymenoptera</taxon>
        <taxon>Apocrita</taxon>
        <taxon>Aculeata</taxon>
        <taxon>Formicoidea</taxon>
        <taxon>Formicidae</taxon>
        <taxon>Myrmicinae</taxon>
        <taxon>Manica</taxon>
    </lineage>
</organism>
<sequence>MRLSYISLTLAIIFVMAIVHAPETEAKAYPEADAVAEAIAVGEADAVGVADPGIKDALAKIWKILKAEVPTVAAAIENKVG</sequence>
<evidence type="ECO:0000250" key="1">
    <source>
        <dbReference type="UniProtKB" id="Q07932"/>
    </source>
</evidence>
<evidence type="ECO:0000255" key="2"/>
<evidence type="ECO:0000269" key="3">
    <source>
    </source>
</evidence>
<evidence type="ECO:0000303" key="4">
    <source>
    </source>
</evidence>
<evidence type="ECO:0000305" key="5"/>
<evidence type="ECO:0000305" key="6">
    <source>
    </source>
</evidence>
<evidence type="ECO:0000312" key="7">
    <source>
        <dbReference type="EMBL" id="QIQ51444.1"/>
    </source>
</evidence>
<keyword id="KW-0027">Amidation</keyword>
<keyword id="KW-0929">Antimicrobial</keyword>
<keyword id="KW-0964">Secreted</keyword>
<keyword id="KW-0732">Signal</keyword>
<keyword id="KW-0800">Toxin</keyword>
<feature type="signal peptide" evidence="2">
    <location>
        <begin position="1"/>
        <end position="26"/>
    </location>
</feature>
<feature type="propeptide" id="PRO_0000453061" evidence="6">
    <location>
        <begin position="27"/>
        <end position="52"/>
    </location>
</feature>
<feature type="peptide" id="PRO_0000453062" description="U10-myrmicitoxin-Mri1b" evidence="3">
    <location>
        <begin position="53"/>
        <end position="80"/>
    </location>
</feature>
<feature type="modified residue" description="Valine amide" evidence="6">
    <location>
        <position position="80"/>
    </location>
</feature>
<name>TX10B_MANRB</name>
<accession>A0A6G9KJV6</accession>
<reference evidence="7" key="1">
    <citation type="journal article" date="2020" name="J. Proteome Res.">
        <title>Venom Peptide Repertoire of the European Myrmicine Ant Manica rubida: Identification of Insecticidal Toxins.</title>
        <authorList>
            <person name="Touchard A."/>
            <person name="Aili S.R."/>
            <person name="Tene N."/>
            <person name="Barasse V."/>
            <person name="Klopp C."/>
            <person name="Dejean A."/>
            <person name="Kini R.M."/>
            <person name="Mrinalini X."/>
            <person name="Coquet L."/>
            <person name="Jouenne T."/>
            <person name="Lefranc B."/>
            <person name="Leprince J."/>
            <person name="Escoubas P."/>
            <person name="Nicholson G.M."/>
            <person name="Treilhou M."/>
            <person name="Bonnafe E."/>
        </authorList>
    </citation>
    <scope>NUCLEOTIDE SEQUENCE [MRNA]</scope>
    <scope>FUNCTION</scope>
    <scope>SUBCELLULAR LOCATION</scope>
    <scope>TISSUE SPECIFICITY</scope>
    <scope>MASS SPECTROMETRY</scope>
    <scope>TOXIC DOSE</scope>
    <scope>AMIDATION AT VAL-80</scope>
    <source>
        <tissue evidence="7">Venom gland</tissue>
    </source>
</reference>
<protein>
    <recommendedName>
        <fullName evidence="4">U10-myrmicitoxin-Mri1b</fullName>
        <shortName evidence="4">U10-MYRTX-Mri1b</shortName>
    </recommendedName>
</protein>
<comment type="function">
    <text evidence="1 3">Induces paralysis after injection into blowflies (L.caesar), and then death within 24 hours (PubMed:32182430). May have antimicrobial properties, like most ant linear peptides (By similarity).</text>
</comment>
<comment type="subcellular location">
    <subcellularLocation>
        <location evidence="3">Secreted</location>
    </subcellularLocation>
</comment>
<comment type="tissue specificity">
    <text evidence="3">Expressed by the venom gland.</text>
</comment>
<comment type="mass spectrometry"/>
<comment type="toxic dose">
    <text evidence="3">LD(50) is 97.97 +-7.3 nmol/g in blowfly (L.caesar) (at 24 hours post-injection).</text>
</comment>
<comment type="toxic dose">
    <text evidence="3">PD(50) is 58.39 +-7.9 nmol/g in blowfly (L.caesar) (at 1 hour post-injection).</text>
</comment>
<comment type="toxic dose">
    <text evidence="3">PD(50) is 67.37 +-14 nmol/g in blowfly (L.caesar) (at 24 hours post-injection).</text>
</comment>
<comment type="similarity">
    <text evidence="5">Belongs to the formicidae venom precursor-01 superfamily.</text>
</comment>
<proteinExistence type="evidence at protein level"/>